<proteinExistence type="inferred from homology"/>
<gene>
    <name evidence="2" type="primary">hslV</name>
    <name type="ordered locus">BU578</name>
</gene>
<reference key="1">
    <citation type="journal article" date="2000" name="Nature">
        <title>Genome sequence of the endocellular bacterial symbiont of aphids Buchnera sp. APS.</title>
        <authorList>
            <person name="Shigenobu S."/>
            <person name="Watanabe H."/>
            <person name="Hattori M."/>
            <person name="Sakaki Y."/>
            <person name="Ishikawa H."/>
        </authorList>
    </citation>
    <scope>NUCLEOTIDE SEQUENCE [LARGE SCALE GENOMIC DNA]</scope>
    <source>
        <strain>APS</strain>
    </source>
</reference>
<accession>P57115</accession>
<organism>
    <name type="scientific">Buchnera aphidicola subsp. Acyrthosiphon pisum (strain APS)</name>
    <name type="common">Acyrthosiphon pisum symbiotic bacterium</name>
    <dbReference type="NCBI Taxonomy" id="107806"/>
    <lineage>
        <taxon>Bacteria</taxon>
        <taxon>Pseudomonadati</taxon>
        <taxon>Pseudomonadota</taxon>
        <taxon>Gammaproteobacteria</taxon>
        <taxon>Enterobacterales</taxon>
        <taxon>Erwiniaceae</taxon>
        <taxon>Buchnera</taxon>
    </lineage>
</organism>
<evidence type="ECO:0000250" key="1"/>
<evidence type="ECO:0000255" key="2">
    <source>
        <dbReference type="HAMAP-Rule" id="MF_00248"/>
    </source>
</evidence>
<evidence type="ECO:0000305" key="3"/>
<protein>
    <recommendedName>
        <fullName evidence="2">ATP-dependent protease subunit HslV</fullName>
        <ecNumber evidence="2">3.4.25.2</ecNumber>
    </recommendedName>
</protein>
<name>HSLV_BUCAI</name>
<feature type="initiator methionine" description="Removed" evidence="1">
    <location>
        <position position="1"/>
    </location>
</feature>
<feature type="chain" id="PRO_0000148094" description="ATP-dependent protease subunit HslV">
    <location>
        <begin position="2"/>
        <end position="176"/>
    </location>
</feature>
<feature type="active site" evidence="2">
    <location>
        <position position="2"/>
    </location>
</feature>
<feature type="binding site" evidence="2">
    <location>
        <position position="157"/>
    </location>
    <ligand>
        <name>Na(+)</name>
        <dbReference type="ChEBI" id="CHEBI:29101"/>
    </ligand>
</feature>
<feature type="binding site" evidence="2">
    <location>
        <position position="160"/>
    </location>
    <ligand>
        <name>Na(+)</name>
        <dbReference type="ChEBI" id="CHEBI:29101"/>
    </ligand>
</feature>
<feature type="binding site" evidence="2">
    <location>
        <position position="163"/>
    </location>
    <ligand>
        <name>Na(+)</name>
        <dbReference type="ChEBI" id="CHEBI:29101"/>
    </ligand>
</feature>
<comment type="function">
    <text evidence="2">Protease subunit of a proteasome-like degradation complex believed to be a general protein degrading machinery.</text>
</comment>
<comment type="catalytic activity">
    <reaction evidence="2">
        <text>ATP-dependent cleavage of peptide bonds with broad specificity.</text>
        <dbReference type="EC" id="3.4.25.2"/>
    </reaction>
</comment>
<comment type="activity regulation">
    <text evidence="2">Allosterically activated by HslU binding.</text>
</comment>
<comment type="subunit">
    <text evidence="2">A double ring-shaped homohexamer of HslV is capped on each side by a ring-shaped HslU homohexamer. The assembly of the HslU/HslV complex is dependent on binding of ATP.</text>
</comment>
<comment type="subcellular location">
    <subcellularLocation>
        <location evidence="2">Cytoplasm</location>
    </subcellularLocation>
</comment>
<comment type="similarity">
    <text evidence="2">Belongs to the peptidase T1B family. HslV subfamily.</text>
</comment>
<comment type="sequence caution" evidence="3">
    <conflict type="erroneous initiation">
        <sequence resource="EMBL-CDS" id="BAB13267"/>
    </conflict>
</comment>
<sequence length="176" mass="19317">MTTILSVRLKNKVVIGGDGQATLGNTIMKSNVKKIRSLYHEKVIAGFAGGTADAFTLFEMFDKKLAMYQGQLQRAAIELAKDWRSDRMLRKLEALLAVADKKTSLIITGNGDVIQPEDDLIAIGSGGSYAQSSARALIENTHLDANQIVRKSLNIAANICIYTNHNFTIKELFSEK</sequence>
<keyword id="KW-0021">Allosteric enzyme</keyword>
<keyword id="KW-0963">Cytoplasm</keyword>
<keyword id="KW-0378">Hydrolase</keyword>
<keyword id="KW-0479">Metal-binding</keyword>
<keyword id="KW-0645">Protease</keyword>
<keyword id="KW-1185">Reference proteome</keyword>
<keyword id="KW-0915">Sodium</keyword>
<keyword id="KW-0888">Threonine protease</keyword>
<dbReference type="EC" id="3.4.25.2" evidence="2"/>
<dbReference type="EMBL" id="BA000003">
    <property type="protein sequence ID" value="BAB13267.1"/>
    <property type="status" value="ALT_INIT"/>
    <property type="molecule type" value="Genomic_DNA"/>
</dbReference>
<dbReference type="RefSeq" id="NP_240381.2">
    <property type="nucleotide sequence ID" value="NC_002528.1"/>
</dbReference>
<dbReference type="RefSeq" id="WP_010896171.1">
    <property type="nucleotide sequence ID" value="NC_002528.1"/>
</dbReference>
<dbReference type="SMR" id="P57115"/>
<dbReference type="STRING" id="563178.BUAP5A_571"/>
<dbReference type="MEROPS" id="T01.006"/>
<dbReference type="EnsemblBacteria" id="BAB13267">
    <property type="protein sequence ID" value="BAB13267"/>
    <property type="gene ID" value="BAB13267"/>
</dbReference>
<dbReference type="KEGG" id="buc:BU578"/>
<dbReference type="PATRIC" id="fig|107806.10.peg.583"/>
<dbReference type="eggNOG" id="COG5405">
    <property type="taxonomic scope" value="Bacteria"/>
</dbReference>
<dbReference type="HOGENOM" id="CLU_093872_1_0_6"/>
<dbReference type="Proteomes" id="UP000001806">
    <property type="component" value="Chromosome"/>
</dbReference>
<dbReference type="GO" id="GO:0009376">
    <property type="term" value="C:HslUV protease complex"/>
    <property type="evidence" value="ECO:0007669"/>
    <property type="project" value="UniProtKB-UniRule"/>
</dbReference>
<dbReference type="GO" id="GO:0005839">
    <property type="term" value="C:proteasome core complex"/>
    <property type="evidence" value="ECO:0007669"/>
    <property type="project" value="InterPro"/>
</dbReference>
<dbReference type="GO" id="GO:0046872">
    <property type="term" value="F:metal ion binding"/>
    <property type="evidence" value="ECO:0007669"/>
    <property type="project" value="UniProtKB-KW"/>
</dbReference>
<dbReference type="GO" id="GO:0004298">
    <property type="term" value="F:threonine-type endopeptidase activity"/>
    <property type="evidence" value="ECO:0007669"/>
    <property type="project" value="UniProtKB-KW"/>
</dbReference>
<dbReference type="GO" id="GO:0051603">
    <property type="term" value="P:proteolysis involved in protein catabolic process"/>
    <property type="evidence" value="ECO:0007669"/>
    <property type="project" value="InterPro"/>
</dbReference>
<dbReference type="CDD" id="cd01913">
    <property type="entry name" value="protease_HslV"/>
    <property type="match status" value="1"/>
</dbReference>
<dbReference type="FunFam" id="3.60.20.10:FF:000002">
    <property type="entry name" value="ATP-dependent protease subunit HslV"/>
    <property type="match status" value="1"/>
</dbReference>
<dbReference type="Gene3D" id="3.60.20.10">
    <property type="entry name" value="Glutamine Phosphoribosylpyrophosphate, subunit 1, domain 1"/>
    <property type="match status" value="1"/>
</dbReference>
<dbReference type="HAMAP" id="MF_00248">
    <property type="entry name" value="HslV"/>
    <property type="match status" value="1"/>
</dbReference>
<dbReference type="InterPro" id="IPR022281">
    <property type="entry name" value="ATP-dep_Prtase_HsIV_su"/>
</dbReference>
<dbReference type="InterPro" id="IPR029055">
    <property type="entry name" value="Ntn_hydrolases_N"/>
</dbReference>
<dbReference type="InterPro" id="IPR001353">
    <property type="entry name" value="Proteasome_sua/b"/>
</dbReference>
<dbReference type="InterPro" id="IPR023333">
    <property type="entry name" value="Proteasome_suB-type"/>
</dbReference>
<dbReference type="NCBIfam" id="TIGR03692">
    <property type="entry name" value="ATP_dep_HslV"/>
    <property type="match status" value="1"/>
</dbReference>
<dbReference type="NCBIfam" id="NF003964">
    <property type="entry name" value="PRK05456.1"/>
    <property type="match status" value="1"/>
</dbReference>
<dbReference type="PANTHER" id="PTHR32194:SF0">
    <property type="entry name" value="ATP-DEPENDENT PROTEASE SUBUNIT HSLV"/>
    <property type="match status" value="1"/>
</dbReference>
<dbReference type="PANTHER" id="PTHR32194">
    <property type="entry name" value="METALLOPROTEASE TLDD"/>
    <property type="match status" value="1"/>
</dbReference>
<dbReference type="Pfam" id="PF00227">
    <property type="entry name" value="Proteasome"/>
    <property type="match status" value="1"/>
</dbReference>
<dbReference type="PIRSF" id="PIRSF039093">
    <property type="entry name" value="HslV"/>
    <property type="match status" value="1"/>
</dbReference>
<dbReference type="SUPFAM" id="SSF56235">
    <property type="entry name" value="N-terminal nucleophile aminohydrolases (Ntn hydrolases)"/>
    <property type="match status" value="1"/>
</dbReference>
<dbReference type="PROSITE" id="PS51476">
    <property type="entry name" value="PROTEASOME_BETA_2"/>
    <property type="match status" value="1"/>
</dbReference>